<feature type="chain" id="PRO_1000031117" description="Ribonuclease HII">
    <location>
        <begin position="1"/>
        <end position="201"/>
    </location>
</feature>
<feature type="domain" description="RNase H type-2" evidence="2">
    <location>
        <begin position="10"/>
        <end position="200"/>
    </location>
</feature>
<feature type="binding site" evidence="1">
    <location>
        <position position="16"/>
    </location>
    <ligand>
        <name>a divalent metal cation</name>
        <dbReference type="ChEBI" id="CHEBI:60240"/>
    </ligand>
</feature>
<feature type="binding site" evidence="1">
    <location>
        <position position="17"/>
    </location>
    <ligand>
        <name>a divalent metal cation</name>
        <dbReference type="ChEBI" id="CHEBI:60240"/>
    </ligand>
</feature>
<feature type="binding site" evidence="1">
    <location>
        <position position="108"/>
    </location>
    <ligand>
        <name>a divalent metal cation</name>
        <dbReference type="ChEBI" id="CHEBI:60240"/>
    </ligand>
</feature>
<keyword id="KW-0963">Cytoplasm</keyword>
<keyword id="KW-0255">Endonuclease</keyword>
<keyword id="KW-0378">Hydrolase</keyword>
<keyword id="KW-0464">Manganese</keyword>
<keyword id="KW-0479">Metal-binding</keyword>
<keyword id="KW-0540">Nuclease</keyword>
<accession>A6L046</accession>
<protein>
    <recommendedName>
        <fullName evidence="1">Ribonuclease HII</fullName>
        <shortName evidence="1">RNase HII</shortName>
        <ecNumber evidence="1">3.1.26.4</ecNumber>
    </recommendedName>
</protein>
<dbReference type="EC" id="3.1.26.4" evidence="1"/>
<dbReference type="EMBL" id="CP000139">
    <property type="protein sequence ID" value="ABR39060.1"/>
    <property type="molecule type" value="Genomic_DNA"/>
</dbReference>
<dbReference type="RefSeq" id="WP_005838886.1">
    <property type="nucleotide sequence ID" value="NZ_JANSWM010000103.1"/>
</dbReference>
<dbReference type="SMR" id="A6L046"/>
<dbReference type="STRING" id="435590.BVU_1371"/>
<dbReference type="PaxDb" id="435590-BVU_1371"/>
<dbReference type="GeneID" id="5302337"/>
<dbReference type="KEGG" id="bvu:BVU_1371"/>
<dbReference type="eggNOG" id="COG0164">
    <property type="taxonomic scope" value="Bacteria"/>
</dbReference>
<dbReference type="HOGENOM" id="CLU_036532_3_1_10"/>
<dbReference type="BioCyc" id="BVUL435590:G1G59-1432-MONOMER"/>
<dbReference type="Proteomes" id="UP000002861">
    <property type="component" value="Chromosome"/>
</dbReference>
<dbReference type="GO" id="GO:0005737">
    <property type="term" value="C:cytoplasm"/>
    <property type="evidence" value="ECO:0007669"/>
    <property type="project" value="UniProtKB-SubCell"/>
</dbReference>
<dbReference type="GO" id="GO:0032299">
    <property type="term" value="C:ribonuclease H2 complex"/>
    <property type="evidence" value="ECO:0007669"/>
    <property type="project" value="TreeGrafter"/>
</dbReference>
<dbReference type="GO" id="GO:0030145">
    <property type="term" value="F:manganese ion binding"/>
    <property type="evidence" value="ECO:0007669"/>
    <property type="project" value="UniProtKB-UniRule"/>
</dbReference>
<dbReference type="GO" id="GO:0003723">
    <property type="term" value="F:RNA binding"/>
    <property type="evidence" value="ECO:0007669"/>
    <property type="project" value="InterPro"/>
</dbReference>
<dbReference type="GO" id="GO:0004523">
    <property type="term" value="F:RNA-DNA hybrid ribonuclease activity"/>
    <property type="evidence" value="ECO:0007669"/>
    <property type="project" value="UniProtKB-UniRule"/>
</dbReference>
<dbReference type="GO" id="GO:0043137">
    <property type="term" value="P:DNA replication, removal of RNA primer"/>
    <property type="evidence" value="ECO:0007669"/>
    <property type="project" value="TreeGrafter"/>
</dbReference>
<dbReference type="GO" id="GO:0006298">
    <property type="term" value="P:mismatch repair"/>
    <property type="evidence" value="ECO:0007669"/>
    <property type="project" value="TreeGrafter"/>
</dbReference>
<dbReference type="CDD" id="cd07182">
    <property type="entry name" value="RNase_HII_bacteria_HII_like"/>
    <property type="match status" value="1"/>
</dbReference>
<dbReference type="FunFam" id="3.30.420.10:FF:000078">
    <property type="entry name" value="Ribonuclease HII"/>
    <property type="match status" value="1"/>
</dbReference>
<dbReference type="Gene3D" id="3.30.420.10">
    <property type="entry name" value="Ribonuclease H-like superfamily/Ribonuclease H"/>
    <property type="match status" value="1"/>
</dbReference>
<dbReference type="HAMAP" id="MF_00052_B">
    <property type="entry name" value="RNase_HII_B"/>
    <property type="match status" value="1"/>
</dbReference>
<dbReference type="InterPro" id="IPR022898">
    <property type="entry name" value="RNase_HII"/>
</dbReference>
<dbReference type="InterPro" id="IPR001352">
    <property type="entry name" value="RNase_HII/HIII"/>
</dbReference>
<dbReference type="InterPro" id="IPR024567">
    <property type="entry name" value="RNase_HII/HIII_dom"/>
</dbReference>
<dbReference type="InterPro" id="IPR012337">
    <property type="entry name" value="RNaseH-like_sf"/>
</dbReference>
<dbReference type="InterPro" id="IPR036397">
    <property type="entry name" value="RNaseH_sf"/>
</dbReference>
<dbReference type="NCBIfam" id="NF000595">
    <property type="entry name" value="PRK00015.1-3"/>
    <property type="match status" value="1"/>
</dbReference>
<dbReference type="PANTHER" id="PTHR10954">
    <property type="entry name" value="RIBONUCLEASE H2 SUBUNIT A"/>
    <property type="match status" value="1"/>
</dbReference>
<dbReference type="PANTHER" id="PTHR10954:SF18">
    <property type="entry name" value="RIBONUCLEASE HII"/>
    <property type="match status" value="1"/>
</dbReference>
<dbReference type="Pfam" id="PF01351">
    <property type="entry name" value="RNase_HII"/>
    <property type="match status" value="1"/>
</dbReference>
<dbReference type="SUPFAM" id="SSF53098">
    <property type="entry name" value="Ribonuclease H-like"/>
    <property type="match status" value="1"/>
</dbReference>
<dbReference type="PROSITE" id="PS51975">
    <property type="entry name" value="RNASE_H_2"/>
    <property type="match status" value="1"/>
</dbReference>
<reference key="1">
    <citation type="journal article" date="2007" name="PLoS Biol.">
        <title>Evolution of symbiotic bacteria in the distal human intestine.</title>
        <authorList>
            <person name="Xu J."/>
            <person name="Mahowald M.A."/>
            <person name="Ley R.E."/>
            <person name="Lozupone C.A."/>
            <person name="Hamady M."/>
            <person name="Martens E.C."/>
            <person name="Henrissat B."/>
            <person name="Coutinho P.M."/>
            <person name="Minx P."/>
            <person name="Latreille P."/>
            <person name="Cordum H."/>
            <person name="Van Brunt A."/>
            <person name="Kim K."/>
            <person name="Fulton R.S."/>
            <person name="Fulton L.A."/>
            <person name="Clifton S.W."/>
            <person name="Wilson R.K."/>
            <person name="Knight R.D."/>
            <person name="Gordon J.I."/>
        </authorList>
    </citation>
    <scope>NUCLEOTIDE SEQUENCE [LARGE SCALE GENOMIC DNA]</scope>
    <source>
        <strain>ATCC 8482 / DSM 1447 / JCM 5826 / CCUG 4940 / NBRC 14291 / NCTC 11154</strain>
    </source>
</reference>
<comment type="function">
    <text evidence="1">Endonuclease that specifically degrades the RNA of RNA-DNA hybrids.</text>
</comment>
<comment type="catalytic activity">
    <reaction evidence="1">
        <text>Endonucleolytic cleavage to 5'-phosphomonoester.</text>
        <dbReference type="EC" id="3.1.26.4"/>
    </reaction>
</comment>
<comment type="cofactor">
    <cofactor evidence="1">
        <name>Mn(2+)</name>
        <dbReference type="ChEBI" id="CHEBI:29035"/>
    </cofactor>
    <cofactor evidence="1">
        <name>Mg(2+)</name>
        <dbReference type="ChEBI" id="CHEBI:18420"/>
    </cofactor>
    <text evidence="1">Manganese or magnesium. Binds 1 divalent metal ion per monomer in the absence of substrate. May bind a second metal ion after substrate binding.</text>
</comment>
<comment type="subcellular location">
    <subcellularLocation>
        <location evidence="1">Cytoplasm</location>
    </subcellularLocation>
</comment>
<comment type="similarity">
    <text evidence="1">Belongs to the RNase HII family.</text>
</comment>
<name>RNH2_PHOV8</name>
<sequence>MLLPYLNKDLIEAGCDEAGRGCLAGSVYAAAVILPVDFKNELLNDSKQLTEHQRYALREIVEREALAWAVGVVTPEEIDEINILNASFLAMHRAVDQLKIRPQHLLIDGNRFKKYQDLPHTTVVKGDGKYLSIAAASILAKTYRDDYMNELHKEYPFYDWNSNKGYPTKKHRAAIREHGTTPYHRMTFNLLGTDPQLEIPF</sequence>
<proteinExistence type="inferred from homology"/>
<gene>
    <name evidence="1" type="primary">rnhB</name>
    <name type="ordered locus">BVU_1371</name>
</gene>
<organism>
    <name type="scientific">Phocaeicola vulgatus (strain ATCC 8482 / DSM 1447 / JCM 5826 / CCUG 4940 / NBRC 14291 / NCTC 11154)</name>
    <name type="common">Bacteroides vulgatus</name>
    <dbReference type="NCBI Taxonomy" id="435590"/>
    <lineage>
        <taxon>Bacteria</taxon>
        <taxon>Pseudomonadati</taxon>
        <taxon>Bacteroidota</taxon>
        <taxon>Bacteroidia</taxon>
        <taxon>Bacteroidales</taxon>
        <taxon>Bacteroidaceae</taxon>
        <taxon>Phocaeicola</taxon>
    </lineage>
</organism>
<evidence type="ECO:0000255" key="1">
    <source>
        <dbReference type="HAMAP-Rule" id="MF_00052"/>
    </source>
</evidence>
<evidence type="ECO:0000255" key="2">
    <source>
        <dbReference type="PROSITE-ProRule" id="PRU01319"/>
    </source>
</evidence>